<proteinExistence type="predicted"/>
<name>Y049_BUCAP</name>
<feature type="chain" id="PRO_0000139429" description="Uncharacterized protein BUsg_049">
    <location>
        <begin position="1"/>
        <end position="147"/>
    </location>
</feature>
<feature type="domain" description="Rhodanese" evidence="1">
    <location>
        <begin position="50"/>
        <end position="140"/>
    </location>
</feature>
<dbReference type="EMBL" id="AE013218">
    <property type="protein sequence ID" value="AAM67620.1"/>
    <property type="molecule type" value="Genomic_DNA"/>
</dbReference>
<dbReference type="RefSeq" id="WP_011053586.1">
    <property type="nucleotide sequence ID" value="NC_004061.1"/>
</dbReference>
<dbReference type="SMR" id="Q8KA58"/>
<dbReference type="STRING" id="198804.BUsg_049"/>
<dbReference type="GeneID" id="93003516"/>
<dbReference type="KEGG" id="bas:BUsg_049"/>
<dbReference type="eggNOG" id="COG0607">
    <property type="taxonomic scope" value="Bacteria"/>
</dbReference>
<dbReference type="HOGENOM" id="CLU_089574_1_5_6"/>
<dbReference type="Proteomes" id="UP000000416">
    <property type="component" value="Chromosome"/>
</dbReference>
<dbReference type="CDD" id="cd00158">
    <property type="entry name" value="RHOD"/>
    <property type="match status" value="1"/>
</dbReference>
<dbReference type="Gene3D" id="3.40.250.10">
    <property type="entry name" value="Rhodanese-like domain"/>
    <property type="match status" value="1"/>
</dbReference>
<dbReference type="InterPro" id="IPR001763">
    <property type="entry name" value="Rhodanese-like_dom"/>
</dbReference>
<dbReference type="InterPro" id="IPR036873">
    <property type="entry name" value="Rhodanese-like_dom_sf"/>
</dbReference>
<dbReference type="Pfam" id="PF00581">
    <property type="entry name" value="Rhodanese"/>
    <property type="match status" value="1"/>
</dbReference>
<dbReference type="SMART" id="SM00450">
    <property type="entry name" value="RHOD"/>
    <property type="match status" value="1"/>
</dbReference>
<dbReference type="SUPFAM" id="SSF52821">
    <property type="entry name" value="Rhodanese/Cell cycle control phosphatase"/>
    <property type="match status" value="1"/>
</dbReference>
<dbReference type="PROSITE" id="PS50206">
    <property type="entry name" value="RHODANESE_3"/>
    <property type="match status" value="1"/>
</dbReference>
<evidence type="ECO:0000255" key="1">
    <source>
        <dbReference type="PROSITE-ProRule" id="PRU00173"/>
    </source>
</evidence>
<gene>
    <name type="ordered locus">BUsg_049</name>
</gene>
<accession>Q8KA58</accession>
<protein>
    <recommendedName>
        <fullName>Uncharacterized protein BUsg_049</fullName>
    </recommendedName>
</protein>
<reference key="1">
    <citation type="journal article" date="2002" name="Science">
        <title>50 million years of genomic stasis in endosymbiotic bacteria.</title>
        <authorList>
            <person name="Tamas I."/>
            <person name="Klasson L."/>
            <person name="Canbaeck B."/>
            <person name="Naeslund A.K."/>
            <person name="Eriksson A.-S."/>
            <person name="Wernegreen J.J."/>
            <person name="Sandstroem J.P."/>
            <person name="Moran N.A."/>
            <person name="Andersson S.G.E."/>
        </authorList>
    </citation>
    <scope>NUCLEOTIDE SEQUENCE [LARGE SCALE GENOMIC DNA]</scope>
    <source>
        <strain>Sg</strain>
    </source>
</reference>
<sequence>MQDALFFISNNLVLSLIWLFFLILIFFLSTKNMFLKSKIINNFHAINLINQKKAIIVDTRSVELYDSGHIINAINIPFNNICRKTIKKLSLSRSVPIILIIDSLEYNKYIKKFTKYGLDKVYFLKNGMNSWNSENLPTTFKKNIFLK</sequence>
<organism>
    <name type="scientific">Buchnera aphidicola subsp. Schizaphis graminum (strain Sg)</name>
    <dbReference type="NCBI Taxonomy" id="198804"/>
    <lineage>
        <taxon>Bacteria</taxon>
        <taxon>Pseudomonadati</taxon>
        <taxon>Pseudomonadota</taxon>
        <taxon>Gammaproteobacteria</taxon>
        <taxon>Enterobacterales</taxon>
        <taxon>Erwiniaceae</taxon>
        <taxon>Buchnera</taxon>
    </lineage>
</organism>